<dbReference type="EC" id="4.2.1.113" evidence="1"/>
<dbReference type="EMBL" id="FM200053">
    <property type="protein sequence ID" value="CAR58650.1"/>
    <property type="molecule type" value="Genomic_DNA"/>
</dbReference>
<dbReference type="RefSeq" id="WP_001255559.1">
    <property type="nucleotide sequence ID" value="NC_011147.1"/>
</dbReference>
<dbReference type="SMR" id="B5BCN9"/>
<dbReference type="KEGG" id="sek:SSPA0521"/>
<dbReference type="HOGENOM" id="CLU_030273_0_1_6"/>
<dbReference type="UniPathway" id="UPA00079"/>
<dbReference type="UniPathway" id="UPA01057">
    <property type="reaction ID" value="UER00165"/>
</dbReference>
<dbReference type="Proteomes" id="UP000001869">
    <property type="component" value="Chromosome"/>
</dbReference>
<dbReference type="GO" id="GO:0000287">
    <property type="term" value="F:magnesium ion binding"/>
    <property type="evidence" value="ECO:0007669"/>
    <property type="project" value="UniProtKB-UniRule"/>
</dbReference>
<dbReference type="GO" id="GO:0043748">
    <property type="term" value="F:O-succinylbenzoate synthase activity"/>
    <property type="evidence" value="ECO:0007669"/>
    <property type="project" value="UniProtKB-EC"/>
</dbReference>
<dbReference type="GO" id="GO:0009234">
    <property type="term" value="P:menaquinone biosynthetic process"/>
    <property type="evidence" value="ECO:0007669"/>
    <property type="project" value="UniProtKB-UniRule"/>
</dbReference>
<dbReference type="CDD" id="cd03320">
    <property type="entry name" value="OSBS"/>
    <property type="match status" value="1"/>
</dbReference>
<dbReference type="FunFam" id="3.20.20.120:FF:000006">
    <property type="entry name" value="o-succinylbenzoate synthase"/>
    <property type="match status" value="1"/>
</dbReference>
<dbReference type="Gene3D" id="3.20.20.120">
    <property type="entry name" value="Enolase-like C-terminal domain"/>
    <property type="match status" value="1"/>
</dbReference>
<dbReference type="Gene3D" id="3.30.390.10">
    <property type="entry name" value="Enolase-like, N-terminal domain"/>
    <property type="match status" value="1"/>
</dbReference>
<dbReference type="HAMAP" id="MF_00470">
    <property type="entry name" value="MenC_1"/>
    <property type="match status" value="1"/>
</dbReference>
<dbReference type="InterPro" id="IPR036849">
    <property type="entry name" value="Enolase-like_C_sf"/>
</dbReference>
<dbReference type="InterPro" id="IPR029017">
    <property type="entry name" value="Enolase-like_N"/>
</dbReference>
<dbReference type="InterPro" id="IPR029065">
    <property type="entry name" value="Enolase_C-like"/>
</dbReference>
<dbReference type="InterPro" id="IPR013342">
    <property type="entry name" value="Mandelate_racemase_C"/>
</dbReference>
<dbReference type="InterPro" id="IPR010196">
    <property type="entry name" value="OSB_synthase_MenC1"/>
</dbReference>
<dbReference type="InterPro" id="IPR041338">
    <property type="entry name" value="OSBS_N"/>
</dbReference>
<dbReference type="NCBIfam" id="TIGR01927">
    <property type="entry name" value="menC_gam_Gplu"/>
    <property type="match status" value="1"/>
</dbReference>
<dbReference type="NCBIfam" id="NF003473">
    <property type="entry name" value="PRK05105.1"/>
    <property type="match status" value="1"/>
</dbReference>
<dbReference type="PANTHER" id="PTHR48073:SF2">
    <property type="entry name" value="O-SUCCINYLBENZOATE SYNTHASE"/>
    <property type="match status" value="1"/>
</dbReference>
<dbReference type="PANTHER" id="PTHR48073">
    <property type="entry name" value="O-SUCCINYLBENZOATE SYNTHASE-RELATED"/>
    <property type="match status" value="1"/>
</dbReference>
<dbReference type="Pfam" id="PF21508">
    <property type="entry name" value="MenC_N"/>
    <property type="match status" value="1"/>
</dbReference>
<dbReference type="Pfam" id="PF13378">
    <property type="entry name" value="MR_MLE_C"/>
    <property type="match status" value="1"/>
</dbReference>
<dbReference type="SFLD" id="SFLDG00180">
    <property type="entry name" value="muconate_cycloisomerase"/>
    <property type="match status" value="1"/>
</dbReference>
<dbReference type="SFLD" id="SFLDF00009">
    <property type="entry name" value="o-succinylbenzoate_synthase"/>
    <property type="match status" value="1"/>
</dbReference>
<dbReference type="SMART" id="SM00922">
    <property type="entry name" value="MR_MLE"/>
    <property type="match status" value="1"/>
</dbReference>
<dbReference type="SUPFAM" id="SSF51604">
    <property type="entry name" value="Enolase C-terminal domain-like"/>
    <property type="match status" value="1"/>
</dbReference>
<dbReference type="SUPFAM" id="SSF54826">
    <property type="entry name" value="Enolase N-terminal domain-like"/>
    <property type="match status" value="1"/>
</dbReference>
<accession>B5BCN9</accession>
<sequence>MRSAQVYRWQIPMDAGVVLRDRRLKTRDGLYVCLRDGEREGWGEISPLPGFSQETWEEAQTALLTWVNDWLQGSEGLPEMPSVAFGASCALAELTGVLPEAADYRAAPLCTGDPDDLVLRLADMPGEKIAKVKVGLYEAVRDGMVVNLLLEAIPDLHLRLDANRAWTPLKAQQFAKYVNPDYRARIAFLEEPCKTRDDSRAFARETGIAIAWDESLREADFTFEAEEGVRAVVIKPTLTGSLDKVREQVAAAHALGLTAVISSSIESSLGLTQLARIAAWLTPGTLPGLDTLHLMQAQQIRPWPGNALPCLKRDELERLL</sequence>
<proteinExistence type="inferred from homology"/>
<reference key="1">
    <citation type="journal article" date="2009" name="BMC Genomics">
        <title>Pseudogene accumulation in the evolutionary histories of Salmonella enterica serovars Paratyphi A and Typhi.</title>
        <authorList>
            <person name="Holt K.E."/>
            <person name="Thomson N.R."/>
            <person name="Wain J."/>
            <person name="Langridge G.C."/>
            <person name="Hasan R."/>
            <person name="Bhutta Z.A."/>
            <person name="Quail M.A."/>
            <person name="Norbertczak H."/>
            <person name="Walker D."/>
            <person name="Simmonds M."/>
            <person name="White B."/>
            <person name="Bason N."/>
            <person name="Mungall K."/>
            <person name="Dougan G."/>
            <person name="Parkhill J."/>
        </authorList>
    </citation>
    <scope>NUCLEOTIDE SEQUENCE [LARGE SCALE GENOMIC DNA]</scope>
    <source>
        <strain>AKU_12601</strain>
    </source>
</reference>
<organism>
    <name type="scientific">Salmonella paratyphi A (strain AKU_12601)</name>
    <dbReference type="NCBI Taxonomy" id="554290"/>
    <lineage>
        <taxon>Bacteria</taxon>
        <taxon>Pseudomonadati</taxon>
        <taxon>Pseudomonadota</taxon>
        <taxon>Gammaproteobacteria</taxon>
        <taxon>Enterobacterales</taxon>
        <taxon>Enterobacteriaceae</taxon>
        <taxon>Salmonella</taxon>
    </lineage>
</organism>
<feature type="chain" id="PRO_1000125584" description="o-succinylbenzoate synthase">
    <location>
        <begin position="1"/>
        <end position="320"/>
    </location>
</feature>
<feature type="active site" description="Proton donor" evidence="1">
    <location>
        <position position="133"/>
    </location>
</feature>
<feature type="active site" description="Proton acceptor" evidence="1">
    <location>
        <position position="235"/>
    </location>
</feature>
<feature type="binding site" evidence="1">
    <location>
        <position position="161"/>
    </location>
    <ligand>
        <name>Mg(2+)</name>
        <dbReference type="ChEBI" id="CHEBI:18420"/>
    </ligand>
</feature>
<feature type="binding site" evidence="1">
    <location>
        <position position="190"/>
    </location>
    <ligand>
        <name>Mg(2+)</name>
        <dbReference type="ChEBI" id="CHEBI:18420"/>
    </ligand>
</feature>
<feature type="binding site" evidence="1">
    <location>
        <position position="213"/>
    </location>
    <ligand>
        <name>Mg(2+)</name>
        <dbReference type="ChEBI" id="CHEBI:18420"/>
    </ligand>
</feature>
<comment type="function">
    <text evidence="1">Converts 2-succinyl-6-hydroxy-2,4-cyclohexadiene-1-carboxylate (SHCHC) to 2-succinylbenzoate (OSB).</text>
</comment>
<comment type="catalytic activity">
    <reaction evidence="1">
        <text>(1R,6R)-6-hydroxy-2-succinyl-cyclohexa-2,4-diene-1-carboxylate = 2-succinylbenzoate + H2O</text>
        <dbReference type="Rhea" id="RHEA:10196"/>
        <dbReference type="ChEBI" id="CHEBI:15377"/>
        <dbReference type="ChEBI" id="CHEBI:18325"/>
        <dbReference type="ChEBI" id="CHEBI:58689"/>
        <dbReference type="EC" id="4.2.1.113"/>
    </reaction>
</comment>
<comment type="cofactor">
    <cofactor evidence="1">
        <name>a divalent metal cation</name>
        <dbReference type="ChEBI" id="CHEBI:60240"/>
    </cofactor>
</comment>
<comment type="pathway">
    <text evidence="1">Quinol/quinone metabolism; 1,4-dihydroxy-2-naphthoate biosynthesis; 1,4-dihydroxy-2-naphthoate from chorismate: step 4/7.</text>
</comment>
<comment type="pathway">
    <text evidence="1">Quinol/quinone metabolism; menaquinone biosynthesis.</text>
</comment>
<comment type="similarity">
    <text evidence="1">Belongs to the mandelate racemase/muconate lactonizing enzyme family. MenC type 1 subfamily.</text>
</comment>
<evidence type="ECO:0000255" key="1">
    <source>
        <dbReference type="HAMAP-Rule" id="MF_00470"/>
    </source>
</evidence>
<name>MENC_SALPK</name>
<protein>
    <recommendedName>
        <fullName evidence="1">o-succinylbenzoate synthase</fullName>
        <shortName evidence="1">OSB synthase</shortName>
        <shortName evidence="1">OSBS</shortName>
        <ecNumber evidence="1">4.2.1.113</ecNumber>
    </recommendedName>
    <alternativeName>
        <fullName evidence="1">4-(2'-carboxyphenyl)-4-oxybutyric acid synthase</fullName>
    </alternativeName>
    <alternativeName>
        <fullName evidence="1">o-succinylbenzoic acid synthase</fullName>
    </alternativeName>
</protein>
<keyword id="KW-0456">Lyase</keyword>
<keyword id="KW-0460">Magnesium</keyword>
<keyword id="KW-0474">Menaquinone biosynthesis</keyword>
<keyword id="KW-0479">Metal-binding</keyword>
<gene>
    <name evidence="1" type="primary">menC</name>
    <name type="ordered locus">SSPA0521</name>
</gene>